<dbReference type="EC" id="2.2.1.7" evidence="1"/>
<dbReference type="EMBL" id="AP009049">
    <property type="protein sequence ID" value="BAH06179.1"/>
    <property type="molecule type" value="Genomic_DNA"/>
</dbReference>
<dbReference type="RefSeq" id="WP_012101616.1">
    <property type="nucleotide sequence ID" value="NC_011837.1"/>
</dbReference>
<dbReference type="SMR" id="B9E104"/>
<dbReference type="KEGG" id="ckr:CKR_1128"/>
<dbReference type="HOGENOM" id="CLU_009227_1_4_9"/>
<dbReference type="UniPathway" id="UPA00064">
    <property type="reaction ID" value="UER00091"/>
</dbReference>
<dbReference type="Proteomes" id="UP000007969">
    <property type="component" value="Chromosome"/>
</dbReference>
<dbReference type="GO" id="GO:0005829">
    <property type="term" value="C:cytosol"/>
    <property type="evidence" value="ECO:0007669"/>
    <property type="project" value="TreeGrafter"/>
</dbReference>
<dbReference type="GO" id="GO:0008661">
    <property type="term" value="F:1-deoxy-D-xylulose-5-phosphate synthase activity"/>
    <property type="evidence" value="ECO:0007669"/>
    <property type="project" value="UniProtKB-UniRule"/>
</dbReference>
<dbReference type="GO" id="GO:0000287">
    <property type="term" value="F:magnesium ion binding"/>
    <property type="evidence" value="ECO:0007669"/>
    <property type="project" value="UniProtKB-UniRule"/>
</dbReference>
<dbReference type="GO" id="GO:0030976">
    <property type="term" value="F:thiamine pyrophosphate binding"/>
    <property type="evidence" value="ECO:0007669"/>
    <property type="project" value="UniProtKB-UniRule"/>
</dbReference>
<dbReference type="GO" id="GO:0052865">
    <property type="term" value="P:1-deoxy-D-xylulose 5-phosphate biosynthetic process"/>
    <property type="evidence" value="ECO:0007669"/>
    <property type="project" value="UniProtKB-UniPathway"/>
</dbReference>
<dbReference type="GO" id="GO:0019288">
    <property type="term" value="P:isopentenyl diphosphate biosynthetic process, methylerythritol 4-phosphate pathway"/>
    <property type="evidence" value="ECO:0007669"/>
    <property type="project" value="TreeGrafter"/>
</dbReference>
<dbReference type="GO" id="GO:0016114">
    <property type="term" value="P:terpenoid biosynthetic process"/>
    <property type="evidence" value="ECO:0007669"/>
    <property type="project" value="UniProtKB-UniRule"/>
</dbReference>
<dbReference type="GO" id="GO:0009228">
    <property type="term" value="P:thiamine biosynthetic process"/>
    <property type="evidence" value="ECO:0007669"/>
    <property type="project" value="UniProtKB-UniRule"/>
</dbReference>
<dbReference type="CDD" id="cd02007">
    <property type="entry name" value="TPP_DXS"/>
    <property type="match status" value="1"/>
</dbReference>
<dbReference type="CDD" id="cd07033">
    <property type="entry name" value="TPP_PYR_DXS_TK_like"/>
    <property type="match status" value="1"/>
</dbReference>
<dbReference type="FunFam" id="3.40.50.970:FF:000005">
    <property type="entry name" value="1-deoxy-D-xylulose-5-phosphate synthase"/>
    <property type="match status" value="1"/>
</dbReference>
<dbReference type="Gene3D" id="3.40.50.920">
    <property type="match status" value="1"/>
</dbReference>
<dbReference type="Gene3D" id="3.40.50.970">
    <property type="match status" value="2"/>
</dbReference>
<dbReference type="HAMAP" id="MF_00315">
    <property type="entry name" value="DXP_synth"/>
    <property type="match status" value="1"/>
</dbReference>
<dbReference type="InterPro" id="IPR005477">
    <property type="entry name" value="Dxylulose-5-P_synthase"/>
</dbReference>
<dbReference type="InterPro" id="IPR029061">
    <property type="entry name" value="THDP-binding"/>
</dbReference>
<dbReference type="InterPro" id="IPR009014">
    <property type="entry name" value="Transketo_C/PFOR_II"/>
</dbReference>
<dbReference type="InterPro" id="IPR005475">
    <property type="entry name" value="Transketolase-like_Pyr-bd"/>
</dbReference>
<dbReference type="InterPro" id="IPR033248">
    <property type="entry name" value="Transketolase_C"/>
</dbReference>
<dbReference type="InterPro" id="IPR049557">
    <property type="entry name" value="Transketolase_CS"/>
</dbReference>
<dbReference type="NCBIfam" id="TIGR00204">
    <property type="entry name" value="dxs"/>
    <property type="match status" value="1"/>
</dbReference>
<dbReference type="NCBIfam" id="NF003933">
    <property type="entry name" value="PRK05444.2-2"/>
    <property type="match status" value="1"/>
</dbReference>
<dbReference type="PANTHER" id="PTHR43322">
    <property type="entry name" value="1-D-DEOXYXYLULOSE 5-PHOSPHATE SYNTHASE-RELATED"/>
    <property type="match status" value="1"/>
</dbReference>
<dbReference type="PANTHER" id="PTHR43322:SF5">
    <property type="entry name" value="1-DEOXY-D-XYLULOSE-5-PHOSPHATE SYNTHASE, CHLOROPLASTIC"/>
    <property type="match status" value="1"/>
</dbReference>
<dbReference type="Pfam" id="PF13292">
    <property type="entry name" value="DXP_synthase_N"/>
    <property type="match status" value="1"/>
</dbReference>
<dbReference type="Pfam" id="PF02779">
    <property type="entry name" value="Transket_pyr"/>
    <property type="match status" value="1"/>
</dbReference>
<dbReference type="Pfam" id="PF02780">
    <property type="entry name" value="Transketolase_C"/>
    <property type="match status" value="1"/>
</dbReference>
<dbReference type="SMART" id="SM00861">
    <property type="entry name" value="Transket_pyr"/>
    <property type="match status" value="1"/>
</dbReference>
<dbReference type="SUPFAM" id="SSF52518">
    <property type="entry name" value="Thiamin diphosphate-binding fold (THDP-binding)"/>
    <property type="match status" value="2"/>
</dbReference>
<dbReference type="SUPFAM" id="SSF52922">
    <property type="entry name" value="TK C-terminal domain-like"/>
    <property type="match status" value="1"/>
</dbReference>
<dbReference type="PROSITE" id="PS00801">
    <property type="entry name" value="TRANSKETOLASE_1"/>
    <property type="match status" value="1"/>
</dbReference>
<reference key="1">
    <citation type="submission" date="2005-09" db="EMBL/GenBank/DDBJ databases">
        <title>Complete genome sequence of Clostridium kluyveri and comparative genomics of Clostridia species.</title>
        <authorList>
            <person name="Inui M."/>
            <person name="Nonaka H."/>
            <person name="Shinoda Y."/>
            <person name="Ikenaga Y."/>
            <person name="Abe M."/>
            <person name="Naito K."/>
            <person name="Vertes A.A."/>
            <person name="Yukawa H."/>
        </authorList>
    </citation>
    <scope>NUCLEOTIDE SEQUENCE [LARGE SCALE GENOMIC DNA]</scope>
    <source>
        <strain>NBRC 12016</strain>
    </source>
</reference>
<organism>
    <name type="scientific">Clostridium kluyveri (strain NBRC 12016)</name>
    <dbReference type="NCBI Taxonomy" id="583346"/>
    <lineage>
        <taxon>Bacteria</taxon>
        <taxon>Bacillati</taxon>
        <taxon>Bacillota</taxon>
        <taxon>Clostridia</taxon>
        <taxon>Eubacteriales</taxon>
        <taxon>Clostridiaceae</taxon>
        <taxon>Clostridium</taxon>
    </lineage>
</organism>
<comment type="function">
    <text evidence="1">Catalyzes the acyloin condensation reaction between C atoms 2 and 3 of pyruvate and glyceraldehyde 3-phosphate to yield 1-deoxy-D-xylulose-5-phosphate (DXP).</text>
</comment>
<comment type="catalytic activity">
    <reaction evidence="1">
        <text>D-glyceraldehyde 3-phosphate + pyruvate + H(+) = 1-deoxy-D-xylulose 5-phosphate + CO2</text>
        <dbReference type="Rhea" id="RHEA:12605"/>
        <dbReference type="ChEBI" id="CHEBI:15361"/>
        <dbReference type="ChEBI" id="CHEBI:15378"/>
        <dbReference type="ChEBI" id="CHEBI:16526"/>
        <dbReference type="ChEBI" id="CHEBI:57792"/>
        <dbReference type="ChEBI" id="CHEBI:59776"/>
        <dbReference type="EC" id="2.2.1.7"/>
    </reaction>
</comment>
<comment type="cofactor">
    <cofactor evidence="1">
        <name>Mg(2+)</name>
        <dbReference type="ChEBI" id="CHEBI:18420"/>
    </cofactor>
    <text evidence="1">Binds 1 Mg(2+) ion per subunit.</text>
</comment>
<comment type="cofactor">
    <cofactor evidence="1">
        <name>thiamine diphosphate</name>
        <dbReference type="ChEBI" id="CHEBI:58937"/>
    </cofactor>
    <text evidence="1">Binds 1 thiamine pyrophosphate per subunit.</text>
</comment>
<comment type="pathway">
    <text evidence="1">Metabolic intermediate biosynthesis; 1-deoxy-D-xylulose 5-phosphate biosynthesis; 1-deoxy-D-xylulose 5-phosphate from D-glyceraldehyde 3-phosphate and pyruvate: step 1/1.</text>
</comment>
<comment type="subunit">
    <text evidence="1">Homodimer.</text>
</comment>
<comment type="similarity">
    <text evidence="1">Belongs to the transketolase family. DXPS subfamily.</text>
</comment>
<proteinExistence type="inferred from homology"/>
<feature type="chain" id="PRO_1000132928" description="1-deoxy-D-xylulose-5-phosphate synthase">
    <location>
        <begin position="1"/>
        <end position="624"/>
    </location>
</feature>
<feature type="binding site" evidence="1">
    <location>
        <position position="74"/>
    </location>
    <ligand>
        <name>thiamine diphosphate</name>
        <dbReference type="ChEBI" id="CHEBI:58937"/>
    </ligand>
</feature>
<feature type="binding site" evidence="1">
    <location>
        <begin position="115"/>
        <end position="117"/>
    </location>
    <ligand>
        <name>thiamine diphosphate</name>
        <dbReference type="ChEBI" id="CHEBI:58937"/>
    </ligand>
</feature>
<feature type="binding site" evidence="1">
    <location>
        <position position="146"/>
    </location>
    <ligand>
        <name>Mg(2+)</name>
        <dbReference type="ChEBI" id="CHEBI:18420"/>
    </ligand>
</feature>
<feature type="binding site" evidence="1">
    <location>
        <begin position="147"/>
        <end position="148"/>
    </location>
    <ligand>
        <name>thiamine diphosphate</name>
        <dbReference type="ChEBI" id="CHEBI:58937"/>
    </ligand>
</feature>
<feature type="binding site" evidence="1">
    <location>
        <position position="175"/>
    </location>
    <ligand>
        <name>Mg(2+)</name>
        <dbReference type="ChEBI" id="CHEBI:18420"/>
    </ligand>
</feature>
<feature type="binding site" evidence="1">
    <location>
        <position position="175"/>
    </location>
    <ligand>
        <name>thiamine diphosphate</name>
        <dbReference type="ChEBI" id="CHEBI:58937"/>
    </ligand>
</feature>
<feature type="binding site" evidence="1">
    <location>
        <position position="286"/>
    </location>
    <ligand>
        <name>thiamine diphosphate</name>
        <dbReference type="ChEBI" id="CHEBI:58937"/>
    </ligand>
</feature>
<feature type="binding site" evidence="1">
    <location>
        <position position="366"/>
    </location>
    <ligand>
        <name>thiamine diphosphate</name>
        <dbReference type="ChEBI" id="CHEBI:58937"/>
    </ligand>
</feature>
<gene>
    <name evidence="1" type="primary">dxs</name>
    <name type="ordered locus">CKR_1128</name>
</gene>
<sequence>MFNLLDNYKDVNDIKKMSLDEKKQLALEIREFLIENVSKTGGHLASNLGVVELTLSLFSIFDLNHDKLIWDVGHQAYVHKLLTGRKDKFHTLRQFGGISGFPKKCESVYDFFETGHSSTSISAALGMARARDLKGEKHNVVAVIGDGALTGGMALEALNDVGYRKTKLIIILNDNQMSIGKNVGGVSRYLNKLRVDPKYNKFKEEVESTLKKIPNIGKGMAKYLERLKNGIKKMVVSGMFFEDIGIKYLGPIDGHNIKDLTEVMTAAKKVNNPVIIHVITKKGKGYEFAEKNPGKFHGIGPFNCNNGEIAATSTNTYSKVFGDEMVNLAREDKKIVVITAAMRDGTGLQNFAKEFPERFFDVGIAEQHAVTLAGGMAVEGLKPVFAVYSTFLQRSYDQLLHDICIQKLPVVFAVDRAGIVGDDGETHQGIFDLSYLTEMPNMTVMSPKCMAELTHMLKWALNQNCPIAIRYPRGGDNVYLTPLEDFEFGRWEYILNKGKIALVAQGRMVEHAVLAAEKLEQMGILVRVISACFIKPLDKVMLKKLIEEDVTIITIEDNIIRGGLGSYILEYVNTLHRKVDVINLGFKDEFVRHGKPSILYKLYGLDTGSIVDKVLKVVKLSGIF</sequence>
<keyword id="KW-0414">Isoprene biosynthesis</keyword>
<keyword id="KW-0460">Magnesium</keyword>
<keyword id="KW-0479">Metal-binding</keyword>
<keyword id="KW-0784">Thiamine biosynthesis</keyword>
<keyword id="KW-0786">Thiamine pyrophosphate</keyword>
<keyword id="KW-0808">Transferase</keyword>
<name>DXS_CLOK1</name>
<evidence type="ECO:0000255" key="1">
    <source>
        <dbReference type="HAMAP-Rule" id="MF_00315"/>
    </source>
</evidence>
<accession>B9E104</accession>
<protein>
    <recommendedName>
        <fullName evidence="1">1-deoxy-D-xylulose-5-phosphate synthase</fullName>
        <ecNumber evidence="1">2.2.1.7</ecNumber>
    </recommendedName>
    <alternativeName>
        <fullName evidence="1">1-deoxyxylulose-5-phosphate synthase</fullName>
        <shortName evidence="1">DXP synthase</shortName>
        <shortName evidence="1">DXPS</shortName>
    </alternativeName>
</protein>